<sequence length="1077" mass="109811">MHQPPESTAAAAAAADISARKMAHPAMFPRRGSGGGSASALNAAGTGVSGAAPSSEDFPPPSLLQPPPPAASSTQGPQPPPPQSLNLLSQAQLQGQPLAPGGTQMKKKSGFQITSVTPAQISASISSNNSIAEDTESYDDLDESHTEDLSSSEILDVSLSRATDLGEPERSSSEETLNNFQEAETPGAVSPNQPHLPQPHLPHLPQQNVVINGNAHPHHLHHHHHPHHGHHLHHGHHHSSHAAVAGPSIPGGPPSSPVSRKLSTTGSSDGGVPVAPPPAVPSSGLPASVMTNIRTPSTTGSLGINSVTGTSATNNVNIAAVGSFSPSVTNSVHGNANINTSNIPNAASISGGPGVTSVVNSSILSGMGNGTVSSSPVANSVLNAAAGITVGVVSSQQQQQQQQQPTVNTSRFRVVKLDSTSEPFKKGRWTCTEFYEKENAVPATEGVAINKVVETVKQTPTEASSSERESTSGSSVSSSVSTLSHYTESVGSGEMMGAPAVVAPQQPPLPPAPPGLQGVALQQLEFSSPAPQSIAAVSMPQSISQSQMSQVQLQPQELSFQQKQTLQPVPLQATMSAATGIQPSPVSVVGVTAAVGQQPSVSSLAQPQLPYSQTAPPVQTPLPGAPPQQLQYGQQQPMVPAQIAPGHGQPVTQNPTSEYVQQQQQPIFQAALSSGQSSSTGTGAGISVIPVAQAQGIQLPGQPTAVQTQPAGAAGQPIGQAQTAVSTVPTGGQIASIGQQANIPTAVQQPSTQVTPSVIQQGAPPSSQVVLPAPTGIIHQGVQTRASSLPQQLVIAPQSTLVTVPPQPQGVETVAQGVVSQQLPTGSPLPSASTISVTNQVSSAAPSGMPSVPTNLVPPQNIAQPPATQNGSLVQSVSQSPLIATNINLPLAQQIPLSSTQFSTQSLAQAIGSQMEDARRPAEPSLGGLPQTMSGDSGGMSAVSDGSSSSLAAPASLFPLKVLPLTTPLVDGEDESSGASVVAIDNKIEQAMDLVKSHLMYAVREEVEVLKEQIKELIEKNSQLEQENNLLKTLASPEQLAQFQAQLQTGSPPATTQPQGTTQPPAQPASQGSGSTA</sequence>
<protein>
    <recommendedName>
        <fullName evidence="18">TSC22 domain family protein 1</fullName>
    </recommendedName>
    <alternativeName>
        <fullName evidence="1">Regulatory protein TSC-22</fullName>
    </alternativeName>
    <alternativeName>
        <fullName evidence="1">TGFB-stimulated clone 22 homolog</fullName>
    </alternativeName>
    <alternativeName>
        <fullName>TSC22-related inducible leucine zipper 1b</fullName>
    </alternativeName>
    <alternativeName>
        <fullName evidence="18">Transforming growth factor beta-1-induced transcript 4 protein</fullName>
    </alternativeName>
</protein>
<reference key="1">
    <citation type="journal article" date="1992" name="J. Biol. Chem.">
        <title>Isolation of a gene encoding a putative leucine zipper structure that is induced by transforming growth factor beta 1 and other growth factors.</title>
        <authorList>
            <person name="Shibanuma M."/>
            <person name="Kuroki T."/>
            <person name="Nose K."/>
        </authorList>
    </citation>
    <scope>NUCLEOTIDE SEQUENCE [MRNA] (ISOFORM 2)</scope>
    <scope>SUBCELLULAR LOCATION</scope>
    <scope>INDUCTION BY TGFB1</scope>
    <source>
        <tissue>Osteoblast</tissue>
    </source>
</reference>
<reference key="2">
    <citation type="journal article" date="2004" name="DNA Res.">
        <title>Prediction of the coding sequences of mouse homologues of KIAA gene: IV. The complete nucleotide sequences of 500 mouse KIAA-homologous cDNAs identified by screening of terminal sequences of cDNA clones randomly sampled from size-fractionated libraries.</title>
        <authorList>
            <person name="Okazaki N."/>
            <person name="Kikuno R."/>
            <person name="Ohara R."/>
            <person name="Inamoto S."/>
            <person name="Koseki H."/>
            <person name="Hiraoka S."/>
            <person name="Saga Y."/>
            <person name="Seino S."/>
            <person name="Nishimura M."/>
            <person name="Kaisho T."/>
            <person name="Hoshino K."/>
            <person name="Kitamura H."/>
            <person name="Nagase T."/>
            <person name="Ohara O."/>
            <person name="Koga H."/>
        </authorList>
    </citation>
    <scope>NUCLEOTIDE SEQUENCE [LARGE SCALE MRNA] (ISOFORM 3)</scope>
    <source>
        <tissue>Embryonic tail</tissue>
    </source>
</reference>
<reference key="3">
    <citation type="journal article" date="2004" name="Genome Res.">
        <title>The status, quality, and expansion of the NIH full-length cDNA project: the Mammalian Gene Collection (MGC).</title>
        <authorList>
            <consortium name="The MGC Project Team"/>
        </authorList>
    </citation>
    <scope>NUCLEOTIDE SEQUENCE [LARGE SCALE MRNA] (ISOFORM 1)</scope>
    <source>
        <strain>C57BL/6J</strain>
        <tissue>Brain</tissue>
    </source>
</reference>
<reference key="4">
    <citation type="submission" date="1999-11" db="EMBL/GenBank/DDBJ databases">
        <title>Identification and characterization of a family of leucine zipper genes related to TSC22.</title>
        <authorList>
            <person name="Ershler M.A."/>
            <person name="Belyavsky A.V."/>
            <person name="Visser J.W.M."/>
        </authorList>
    </citation>
    <scope>NUCLEOTIDE SEQUENCE [MRNA] OF 11-1077 (ISOFORM 1)</scope>
</reference>
<reference key="5">
    <citation type="journal article" date="2003" name="J. Biol. Chem.">
        <title>Peroxisome proliferator-activated receptor gamma and transforming growth factor-beta pathways inhibit intestinal epithelial cell growth by regulating levels of TSC-22.</title>
        <authorList>
            <person name="Gupta R.A."/>
            <person name="Sarraf P."/>
            <person name="Brockman J.A."/>
            <person name="Shappell S.B."/>
            <person name="Raftery L.A."/>
            <person name="Willson T.M."/>
            <person name="DuBois R.N."/>
        </authorList>
    </citation>
    <scope>SUBUNIT</scope>
    <scope>INDUCTION BY TGFB1 AND PPARG</scope>
    <scope>MUTAGENESIS OF LEU-1024 AND LEU-1030</scope>
</reference>
<reference key="6">
    <citation type="journal article" date="2007" name="FEBS J.">
        <title>Specific TSC22 domain transcripts are hypertonically induced and alternatively spliced to protect mouse kidney cells during osmotic stress.</title>
        <authorList>
            <person name="Fiol D.F."/>
            <person name="Mak S.K."/>
            <person name="Kueltz D."/>
        </authorList>
    </citation>
    <scope>TISSUE SPECIFICITY (ISOFORMS 1 AND 2)</scope>
</reference>
<reference key="7">
    <citation type="journal article" date="2009" name="Blood">
        <title>TSC-22 contributes to hematopoietic precursor cell proliferation and repopulation and is epigenetically silenced in large granular lymphocyte leukemia.</title>
        <authorList>
            <person name="Yu J."/>
            <person name="Ershler M."/>
            <person name="Yu L."/>
            <person name="Wei M."/>
            <person name="Hackanson B."/>
            <person name="Yokohama A."/>
            <person name="Mitsui T."/>
            <person name="Liu C."/>
            <person name="Mao H."/>
            <person name="Liu S."/>
            <person name="Liu Z."/>
            <person name="Trotta R."/>
            <person name="Liu C.G."/>
            <person name="Liu X."/>
            <person name="Huang K."/>
            <person name="Visser J."/>
            <person name="Marcucci G."/>
            <person name="Plass C."/>
            <person name="Belyavsky A.V."/>
            <person name="Caligiuri M.A."/>
        </authorList>
    </citation>
    <scope>FUNCTION</scope>
    <scope>TISSUE SPECIFICITY</scope>
    <scope>DISRUPTION PHENOTYPE</scope>
</reference>
<reference key="8">
    <citation type="journal article" date="2010" name="Cell">
        <title>A tissue-specific atlas of mouse protein phosphorylation and expression.</title>
        <authorList>
            <person name="Huttlin E.L."/>
            <person name="Jedrychowski M.P."/>
            <person name="Elias J.E."/>
            <person name="Goswami T."/>
            <person name="Rad R."/>
            <person name="Beausoleil S.A."/>
            <person name="Villen J."/>
            <person name="Haas W."/>
            <person name="Sowa M.E."/>
            <person name="Gygi S.P."/>
        </authorList>
    </citation>
    <scope>IDENTIFICATION BY MASS SPECTROMETRY [LARGE SCALE ANALYSIS]</scope>
    <source>
        <tissue>Brain</tissue>
        <tissue>Lung</tissue>
        <tissue>Testis</tissue>
    </source>
</reference>
<reference key="9">
    <citation type="journal article" date="2010" name="Cell Death Differ.">
        <title>TSC-22D1 isoforms have opposing roles in mammary epithelial cell survival.</title>
        <authorList>
            <person name="Huser C.A."/>
            <person name="Pringle M.A."/>
            <person name="Heath V.J."/>
            <person name="Bell A.K."/>
            <person name="Kendrick H."/>
            <person name="Smalley M.J."/>
            <person name="Crighton D."/>
            <person name="Ryan K.M."/>
            <person name="Gusterson B.A."/>
            <person name="Stein T."/>
        </authorList>
    </citation>
    <scope>FUNCTION (ISOFORMS 1 AND 2)</scope>
    <scope>SUBCELLULAR LOCATION</scope>
    <scope>TISSUE SPECIFICITY (ISOFORMS 1 AND 2)</scope>
    <scope>INDUCTION BY TGFB3</scope>
</reference>
<reference key="10">
    <citation type="journal article" date="2010" name="J. Biol. Chem.">
        <title>Post-transcriptional up-regulation of Tsc-22 by Ybx1, a target of miR-216a, mediates TGF-{beta}-induced collagen expression in kidney cells.</title>
        <authorList>
            <person name="Kato M."/>
            <person name="Wang L."/>
            <person name="Putta S."/>
            <person name="Wang M."/>
            <person name="Yuan H."/>
            <person name="Sun G."/>
            <person name="Lanting L."/>
            <person name="Todorov I."/>
            <person name="Rossi J.J."/>
            <person name="Natarajan R."/>
        </authorList>
    </citation>
    <scope>FUNCTION</scope>
    <scope>INTERACTION WITH TFE3</scope>
    <scope>INDUCTION BY TGF-BETA AND DIABETES</scope>
</reference>
<reference key="11">
    <citation type="journal article" date="2016" name="J. Cell. Biochem.">
        <title>TSC-22 Promotes Interleukin-2-Deprivation Induced Apoptosis in T-Lymphocytes.</title>
        <authorList>
            <person name="Pepin A."/>
            <person name="Espinasse M.A."/>
            <person name="Latre de Late P."/>
            <person name="Szely N."/>
            <person name="Pallardy M."/>
            <person name="Biola-Vidamment A."/>
        </authorList>
    </citation>
    <scope>FUNCTION</scope>
    <scope>TISSUE SPECIFICITY</scope>
</reference>
<organism>
    <name type="scientific">Mus musculus</name>
    <name type="common">Mouse</name>
    <dbReference type="NCBI Taxonomy" id="10090"/>
    <lineage>
        <taxon>Eukaryota</taxon>
        <taxon>Metazoa</taxon>
        <taxon>Chordata</taxon>
        <taxon>Craniata</taxon>
        <taxon>Vertebrata</taxon>
        <taxon>Euteleostomi</taxon>
        <taxon>Mammalia</taxon>
        <taxon>Eutheria</taxon>
        <taxon>Euarchontoglires</taxon>
        <taxon>Glires</taxon>
        <taxon>Rodentia</taxon>
        <taxon>Myomorpha</taxon>
        <taxon>Muroidea</taxon>
        <taxon>Muridae</taxon>
        <taxon>Murinae</taxon>
        <taxon>Mus</taxon>
        <taxon>Mus</taxon>
    </lineage>
</organism>
<evidence type="ECO:0000250" key="1">
    <source>
        <dbReference type="UniProtKB" id="P62501"/>
    </source>
</evidence>
<evidence type="ECO:0000250" key="2">
    <source>
        <dbReference type="UniProtKB" id="Q15714"/>
    </source>
</evidence>
<evidence type="ECO:0000256" key="3">
    <source>
        <dbReference type="SAM" id="MobiDB-lite"/>
    </source>
</evidence>
<evidence type="ECO:0000269" key="4">
    <source>
    </source>
</evidence>
<evidence type="ECO:0000269" key="5">
    <source>
    </source>
</evidence>
<evidence type="ECO:0000269" key="6">
    <source>
    </source>
</evidence>
<evidence type="ECO:0000269" key="7">
    <source>
    </source>
</evidence>
<evidence type="ECO:0000269" key="8">
    <source>
    </source>
</evidence>
<evidence type="ECO:0000269" key="9">
    <source>
    </source>
</evidence>
<evidence type="ECO:0000269" key="10">
    <source>
    </source>
</evidence>
<evidence type="ECO:0000303" key="11">
    <source>
    </source>
</evidence>
<evidence type="ECO:0000303" key="12">
    <source>
    </source>
</evidence>
<evidence type="ECO:0000303" key="13">
    <source>
    </source>
</evidence>
<evidence type="ECO:0000303" key="14">
    <source>
    </source>
</evidence>
<evidence type="ECO:0000303" key="15">
    <source>
    </source>
</evidence>
<evidence type="ECO:0000303" key="16">
    <source>
    </source>
</evidence>
<evidence type="ECO:0000305" key="17"/>
<evidence type="ECO:0000312" key="18">
    <source>
        <dbReference type="MGI" id="MGI:109127"/>
    </source>
</evidence>
<feature type="chain" id="PRO_0000219366" description="TSC22 domain family protein 1">
    <location>
        <begin position="1"/>
        <end position="1077"/>
    </location>
</feature>
<feature type="region of interest" description="Required for interaction with TGFBR1 and promotion of TGF-beta signaling" evidence="2">
    <location>
        <begin position="1"/>
        <end position="98"/>
    </location>
</feature>
<feature type="region of interest" description="Disordered" evidence="3">
    <location>
        <begin position="22"/>
        <end position="112"/>
    </location>
</feature>
<feature type="region of interest" description="Disordered" evidence="3">
    <location>
        <begin position="125"/>
        <end position="283"/>
    </location>
</feature>
<feature type="region of interest" description="Disordered" evidence="3">
    <location>
        <begin position="458"/>
        <end position="492"/>
    </location>
</feature>
<feature type="region of interest" description="Disordered" evidence="3">
    <location>
        <begin position="842"/>
        <end position="874"/>
    </location>
</feature>
<feature type="region of interest" description="Disordered" evidence="3">
    <location>
        <begin position="909"/>
        <end position="947"/>
    </location>
</feature>
<feature type="region of interest" description="Leucine-zipper">
    <location>
        <begin position="1010"/>
        <end position="1031"/>
    </location>
</feature>
<feature type="region of interest" description="Disordered" evidence="3">
    <location>
        <begin position="1042"/>
        <end position="1077"/>
    </location>
</feature>
<feature type="compositionally biased region" description="Pro residues" evidence="3">
    <location>
        <begin position="58"/>
        <end position="70"/>
    </location>
</feature>
<feature type="compositionally biased region" description="Low complexity" evidence="3">
    <location>
        <begin position="84"/>
        <end position="96"/>
    </location>
</feature>
<feature type="compositionally biased region" description="Acidic residues" evidence="3">
    <location>
        <begin position="133"/>
        <end position="142"/>
    </location>
</feature>
<feature type="compositionally biased region" description="Basic residues" evidence="3">
    <location>
        <begin position="216"/>
        <end position="240"/>
    </location>
</feature>
<feature type="compositionally biased region" description="Low complexity" evidence="3">
    <location>
        <begin position="471"/>
        <end position="489"/>
    </location>
</feature>
<feature type="compositionally biased region" description="Polar residues" evidence="3">
    <location>
        <begin position="852"/>
        <end position="874"/>
    </location>
</feature>
<feature type="compositionally biased region" description="Low complexity" evidence="3">
    <location>
        <begin position="933"/>
        <end position="947"/>
    </location>
</feature>
<feature type="compositionally biased region" description="Low complexity" evidence="3">
    <location>
        <begin position="1048"/>
        <end position="1077"/>
    </location>
</feature>
<feature type="modified residue" description="Phosphoserine" evidence="2">
    <location>
        <position position="263"/>
    </location>
</feature>
<feature type="splice variant" id="VSP_035327" description="In isoform 2." evidence="13">
    <location>
        <begin position="1"/>
        <end position="934"/>
    </location>
</feature>
<feature type="splice variant" id="VSP_035328" description="In isoform 3." evidence="11">
    <location>
        <begin position="303"/>
        <end position="384"/>
    </location>
</feature>
<feature type="splice variant" id="VSP_035329" description="In isoform 2." evidence="13">
    <original>GDSGGMSAVSDGSSSSLAAPASLFPLKVLPLTTPLVDGEDE</original>
    <variation>MKSQWCRPVAMDLGVYQLRHFSISFLSSLLGTENASVRLDN</variation>
    <location>
        <begin position="935"/>
        <end position="975"/>
    </location>
</feature>
<feature type="mutagenesis site" description="Abolishes homodimerization; when associated with A-1030." evidence="4">
    <original>L</original>
    <variation>A</variation>
    <location>
        <position position="1024"/>
    </location>
</feature>
<feature type="mutagenesis site" description="Abolishes homodimerization; when associated with A-1024." evidence="4">
    <original>L</original>
    <variation>A</variation>
    <location>
        <position position="1030"/>
    </location>
</feature>
<feature type="sequence conflict" description="In Ref. 4; AAG41218." evidence="17" ref="4">
    <original>S</original>
    <variation>SQ</variation>
    <location>
        <position position="395"/>
    </location>
</feature>
<feature type="sequence conflict" description="In Ref. 2; BAD32600." evidence="17" ref="2">
    <location>
        <begin position="396"/>
        <end position="398"/>
    </location>
</feature>
<feature type="sequence conflict" description="In Ref. 4; AAG41218 and 3; AAH58660." evidence="17" ref="4 3">
    <original>I</original>
    <variation>V</variation>
    <location>
        <position position="449"/>
    </location>
</feature>
<feature type="sequence conflict" description="In Ref. 4; AAG41218." evidence="17" ref="4">
    <original>V</original>
    <variation>L</variation>
    <location>
        <position position="551"/>
    </location>
</feature>
<feature type="sequence conflict" description="In Ref. 4; AAG41218 and 3; AAH58660." evidence="17" ref="4 3">
    <original>V</original>
    <variation>I</variation>
    <location>
        <position position="591"/>
    </location>
</feature>
<feature type="sequence conflict" description="In Ref. 2; BAD32600." evidence="17" ref="2">
    <original>V</original>
    <variation>VQQ</variation>
    <location>
        <position position="660"/>
    </location>
</feature>
<feature type="sequence conflict" description="In Ref. 2; BAD32600." evidence="17" ref="2">
    <original>A</original>
    <variation>P</variation>
    <location>
        <position position="714"/>
    </location>
</feature>
<feature type="sequence conflict" description="In Ref. 4; AAG41218." evidence="17" ref="4">
    <original>Q</original>
    <variation>P</variation>
    <location>
        <position position="720"/>
    </location>
</feature>
<feature type="sequence conflict" description="In Ref. 4; AAG41218." evidence="17" ref="4">
    <original>I</original>
    <variation>T</variation>
    <location>
        <position position="737"/>
    </location>
</feature>
<comment type="function">
    <text evidence="2 7 9 10">Transcriptional repressor (By similarity). Acts on the C-type natriuretic peptide (CNP) promoter (By similarity). Acts to promote CASP3-mediated apoptosis (By similarity). Positively regulates TGF-beta signaling by interacting with SMAD7 which inhibits binding of SMAD7 to TGFBR1, preventing recruitment of SMURF ubiquitin ligases to TGFBR1 and inhibiting SMURF-mediated ubiquitination and degradation of TGFBR1 (By similarity). Contributes to enhancement of TGF-beta signaling by binding to and modulating the transcription activator activity of SMAD4 (By similarity). Promotes TGF-beta-induced transcription of COL1A2; via its interaction with TFE3 at E-boxes in the gene proximal promoter (PubMed:20713358). Plays a role in the repression of hematopoietic precursor cell growth (PubMed:19329776). Promotes IL2 deprivation-induced apoptosis in T-lymphocytes, via repression of TSC22D3/GILZ transcription and activation of the caspase cascade (PubMed:26752201).</text>
</comment>
<comment type="function">
    <molecule>Isoform 1</molecule>
    <text evidence="8">May act to negatively regulate TGFB3 signaling and thereby inhibit cell death in mammary gland cells.</text>
</comment>
<comment type="function">
    <molecule>Isoform 2</molecule>
    <text evidence="8">Positively regulates cell death in response to TGFB3 during mammary gland involution.</text>
</comment>
<comment type="subunit">
    <text evidence="2 4 9">Forms homodimers (PubMed:12468551). Forms heterodimers (By similarity). Component of a complex composed of TSC22D1 (via N-terminus), TGFBR1 and TGFBR2; the interaction between TSC22D1 and TGFBR1 is inhibited by SMAD7 and promoted by TGFB1 (By similarity). Interacts with SMAD7; the interaction requires TGF-beta and the interaction is inhibited by TGFBR1 (By similarity). Interacts with TPT1/fortilin; interaction results in the destabilization of TSC22D1 protein and prevents TSC22D1-mediated apoptosis (By similarity). Interacts with SMAD4 (via N-terminus) (By similarity). Interacts with ACVRL1/ALK1, ACVR1/ALK2, BMPR1A/ALK3, ACVR1B/ALK4, BMPR1B/ALK6, ACVR2A/ACTRII, and BMPR2 (By similarity). Interacts with SMAD6 (By similarity). Interacts with TFE3; the interaction is enhanced in the presence of TGF-beta (PubMed:20713358).</text>
</comment>
<comment type="subunit">
    <molecule>Isoform 1</molecule>
    <text evidence="2">Forms a heterodimer with TSC22D4/THG1.</text>
</comment>
<comment type="subunit">
    <molecule>Isoform 2</molecule>
    <text evidence="2">Forms a heterodimer with TSC22D4/THG1 (By similarity). Interacts with histone H1-2 (By similarity). Interacts with GNL3 (By similarity).</text>
</comment>
<comment type="interaction">
    <interactant intactId="EBI-8296837">
        <id>P62500</id>
    </interactant>
    <interactant intactId="EBI-7821198">
        <id>Q9EQN3</id>
        <label>Tsc22d4</label>
    </interactant>
    <organismsDiffer>false</organismsDiffer>
    <experiments>2</experiments>
</comment>
<comment type="subcellular location">
    <subcellularLocation>
        <location evidence="5 8">Cytoplasm</location>
    </subcellularLocation>
    <subcellularLocation>
        <location evidence="5 8">Nucleus</location>
    </subcellularLocation>
    <subcellularLocation>
        <location evidence="2">Cell membrane</location>
        <topology evidence="17">Peripheral membrane protein</topology>
    </subcellularLocation>
</comment>
<comment type="subcellular location">
    <molecule>Isoform 1</molecule>
    <subcellularLocation>
        <location evidence="2">Cytoplasm</location>
    </subcellularLocation>
    <subcellularLocation>
        <location evidence="2">Nucleus</location>
    </subcellularLocation>
    <subcellularLocation>
        <location evidence="2">Mitochondrion</location>
    </subcellularLocation>
</comment>
<comment type="subcellular location">
    <molecule>Isoform 2</molecule>
    <subcellularLocation>
        <location evidence="2">Cytoplasm</location>
    </subcellularLocation>
    <subcellularLocation>
        <location evidence="2">Nucleus</location>
    </subcellularLocation>
    <subcellularLocation>
        <location evidence="2">Mitochondrion</location>
    </subcellularLocation>
</comment>
<comment type="alternative products">
    <event type="alternative splicing"/>
    <isoform>
        <id>P62500-1</id>
        <name>1</name>
        <name evidence="14">TSC22D1-1</name>
        <sequence type="displayed"/>
    </isoform>
    <isoform>
        <id>P62500-2</id>
        <name>2</name>
        <name evidence="14">TSC22D1-2</name>
        <name evidence="16">TSC-22</name>
        <sequence type="described" ref="VSP_035327 VSP_035329"/>
    </isoform>
    <isoform>
        <id>P62500-3</id>
        <name>3</name>
        <sequence type="described" ref="VSP_035328"/>
    </isoform>
</comment>
<comment type="tissue specificity">
    <text evidence="7 10">Expressed in bone marrow cells (at protein level) (PubMed:19329776). Expressed in T-cells (PubMed:26752201). Expressed in the brain (PubMed:19329776).</text>
</comment>
<comment type="tissue specificity">
    <molecule>Isoform 1</molecule>
    <text evidence="6 8">Expressed in the myoepithelial cells of the mammary gland ducts and alveoli, expression is consistent throughout pregnancy, lactation and involution (at protein level) (PubMed:19745830). Expressed in the cortex, medulla and papilla of the kidney (PubMed:17147695).</text>
</comment>
<comment type="tissue specificity">
    <molecule>Isoform 2</molecule>
    <text evidence="6 8">Expressed in the myoepithelial cells of the mammary gland, expression significantly increases in the secretory luminal epithelium of the mammary gland at the initiation of involution, with levels decreasing from day 3 of involution onwards (at protein level) (PubMed:19745830). Expressed in the cortex, medulla and papilla of the kidney (PubMed:17147695).</text>
</comment>
<comment type="induction">
    <text evidence="4 5 8 9">Induced by Tgfb1, Pparg and other growth factors (PubMed:12468551, PubMed:1587811). Induced by Tgfb3 in mammary gland cells (PubMed:19745830). Induced by TGF-beta via up-regulation of Ybx1 regulator miR-216a which decreases Ybx1 abundance and binding of Ybx1 to Tsc22d1 transcripts, thereby increasing Tsc22d1 translation (PubMed:20713358). Induced in the glomeruli of a diabetic mouse model (PubMed:20713358).</text>
</comment>
<comment type="disruption phenotype">
    <text evidence="7">Increase in DNA synthesis in hematopoietic precursor cells from bone marrow, these cells have a greater ability to proliferate and repopulate an irradiated recipient.</text>
</comment>
<comment type="similarity">
    <text evidence="17">Belongs to the TSC-22/Dip/Bun family.</text>
</comment>
<comment type="sequence caution" evidence="17">
    <conflict type="erroneous initiation">
        <sequence resource="EMBL-CDS" id="AAG41218"/>
    </conflict>
</comment>
<comment type="sequence caution" evidence="17">
    <conflict type="erroneous initiation">
        <sequence resource="EMBL-CDS" id="AAH58660"/>
    </conflict>
</comment>
<comment type="sequence caution" evidence="17">
    <conflict type="erroneous initiation">
        <sequence resource="EMBL-CDS" id="BAD32600"/>
    </conflict>
</comment>
<name>T22D1_MOUSE</name>
<keyword id="KW-0025">Alternative splicing</keyword>
<keyword id="KW-1003">Cell membrane</keyword>
<keyword id="KW-0963">Cytoplasm</keyword>
<keyword id="KW-0472">Membrane</keyword>
<keyword id="KW-0496">Mitochondrion</keyword>
<keyword id="KW-0539">Nucleus</keyword>
<keyword id="KW-0597">Phosphoprotein</keyword>
<keyword id="KW-1185">Reference proteome</keyword>
<keyword id="KW-0678">Repressor</keyword>
<keyword id="KW-0804">Transcription</keyword>
<keyword id="KW-0805">Transcription regulation</keyword>
<gene>
    <name evidence="18" type="primary">Tsc22d1</name>
    <name evidence="12" type="synonym">Kiaa1994</name>
    <name evidence="15" type="synonym">Tgfb1i4</name>
    <name type="synonym">Tilz1b</name>
    <name evidence="18" type="synonym">Tsc22</name>
</gene>
<dbReference type="EMBL" id="X62940">
    <property type="protein sequence ID" value="CAA44712.1"/>
    <property type="molecule type" value="mRNA"/>
</dbReference>
<dbReference type="EMBL" id="AK173322">
    <property type="protein sequence ID" value="BAD32600.1"/>
    <property type="status" value="ALT_INIT"/>
    <property type="molecule type" value="mRNA"/>
</dbReference>
<dbReference type="EMBL" id="BC058660">
    <property type="protein sequence ID" value="AAH58660.1"/>
    <property type="status" value="ALT_INIT"/>
    <property type="molecule type" value="mRNA"/>
</dbReference>
<dbReference type="EMBL" id="AF201285">
    <property type="protein sequence ID" value="AAG41218.1"/>
    <property type="status" value="ALT_INIT"/>
    <property type="molecule type" value="mRNA"/>
</dbReference>
<dbReference type="CCDS" id="CCDS27285.2">
    <molecule id="P62500-1"/>
</dbReference>
<dbReference type="CCDS" id="CCDS27286.1">
    <molecule id="P62500-2"/>
</dbReference>
<dbReference type="CCDS" id="CCDS79344.1">
    <molecule id="P62500-3"/>
</dbReference>
<dbReference type="PIR" id="S23255">
    <property type="entry name" value="S23255"/>
</dbReference>
<dbReference type="RefSeq" id="NP_033392.1">
    <molecule id="P62500-2"/>
    <property type="nucleotide sequence ID" value="NM_009366.4"/>
</dbReference>
<dbReference type="RefSeq" id="NP_997535.2">
    <property type="nucleotide sequence ID" value="NM_207652.3"/>
</dbReference>
<dbReference type="SMR" id="P62500"/>
<dbReference type="BioGRID" id="204159">
    <property type="interactions" value="6"/>
</dbReference>
<dbReference type="FunCoup" id="P62500">
    <property type="interactions" value="2706"/>
</dbReference>
<dbReference type="IntAct" id="P62500">
    <property type="interactions" value="1"/>
</dbReference>
<dbReference type="MINT" id="P62500"/>
<dbReference type="STRING" id="10090.ENSMUSP00000044517"/>
<dbReference type="GlyGen" id="P62500">
    <property type="glycosylation" value="3 sites, 1 O-linked glycan (2 sites)"/>
</dbReference>
<dbReference type="iPTMnet" id="P62500"/>
<dbReference type="PhosphoSitePlus" id="P62500"/>
<dbReference type="PaxDb" id="10090-ENSMUSP00000044517"/>
<dbReference type="PeptideAtlas" id="P62500"/>
<dbReference type="ProteomicsDB" id="254628">
    <molecule id="P62500-1"/>
</dbReference>
<dbReference type="ProteomicsDB" id="254629">
    <molecule id="P62500-2"/>
</dbReference>
<dbReference type="ProteomicsDB" id="254630">
    <molecule id="P62500-3"/>
</dbReference>
<dbReference type="Pumba" id="P62500"/>
<dbReference type="Antibodypedia" id="23553">
    <property type="antibodies" value="481 antibodies from 31 providers"/>
</dbReference>
<dbReference type="DNASU" id="21807"/>
<dbReference type="Ensembl" id="ENSMUST00000022587.10">
    <molecule id="P62500-2"/>
    <property type="protein sequence ID" value="ENSMUSP00000022587.10"/>
    <property type="gene ID" value="ENSMUSG00000022010.20"/>
</dbReference>
<dbReference type="GeneID" id="21807"/>
<dbReference type="KEGG" id="mmu:21807"/>
<dbReference type="AGR" id="MGI:109127"/>
<dbReference type="CTD" id="8848"/>
<dbReference type="MGI" id="MGI:109127">
    <property type="gene designation" value="Tsc22d1"/>
</dbReference>
<dbReference type="VEuPathDB" id="HostDB:ENSMUSG00000022010"/>
<dbReference type="eggNOG" id="KOG4797">
    <property type="taxonomic scope" value="Eukaryota"/>
</dbReference>
<dbReference type="GeneTree" id="ENSGT00940000159144"/>
<dbReference type="HOGENOM" id="CLU_148757_0_0_1"/>
<dbReference type="InParanoid" id="P62500"/>
<dbReference type="OrthoDB" id="8961796at2759"/>
<dbReference type="BioGRID-ORCS" id="21807">
    <property type="hits" value="1 hit in 74 CRISPR screens"/>
</dbReference>
<dbReference type="ChiTaRS" id="Tsc22d1">
    <property type="organism name" value="mouse"/>
</dbReference>
<dbReference type="PRO" id="PR:P62500"/>
<dbReference type="Proteomes" id="UP000000589">
    <property type="component" value="Chromosome 14"/>
</dbReference>
<dbReference type="RNAct" id="P62500">
    <property type="molecule type" value="protein"/>
</dbReference>
<dbReference type="Bgee" id="ENSMUSG00000022010">
    <property type="expression patterns" value="Expressed in indifferent gonad and 313 other cell types or tissues"/>
</dbReference>
<dbReference type="ExpressionAtlas" id="P62500">
    <property type="expression patterns" value="baseline and differential"/>
</dbReference>
<dbReference type="GO" id="GO:0005737">
    <property type="term" value="C:cytoplasm"/>
    <property type="evidence" value="ECO:0000314"/>
    <property type="project" value="MGI"/>
</dbReference>
<dbReference type="GO" id="GO:0005739">
    <property type="term" value="C:mitochondrion"/>
    <property type="evidence" value="ECO:0007669"/>
    <property type="project" value="UniProtKB-SubCell"/>
</dbReference>
<dbReference type="GO" id="GO:0005634">
    <property type="term" value="C:nucleus"/>
    <property type="evidence" value="ECO:0000314"/>
    <property type="project" value="MGI"/>
</dbReference>
<dbReference type="GO" id="GO:0005886">
    <property type="term" value="C:plasma membrane"/>
    <property type="evidence" value="ECO:0000250"/>
    <property type="project" value="UniProtKB"/>
</dbReference>
<dbReference type="GO" id="GO:0043066">
    <property type="term" value="P:negative regulation of apoptotic process"/>
    <property type="evidence" value="ECO:0000314"/>
    <property type="project" value="MGI"/>
</dbReference>
<dbReference type="GO" id="GO:1902034">
    <property type="term" value="P:negative regulation of hematopoietic stem cell proliferation"/>
    <property type="evidence" value="ECO:0000315"/>
    <property type="project" value="UniProtKB"/>
</dbReference>
<dbReference type="GO" id="GO:0043069">
    <property type="term" value="P:negative regulation of programmed cell death"/>
    <property type="evidence" value="ECO:0000315"/>
    <property type="project" value="UniProtKB"/>
</dbReference>
<dbReference type="GO" id="GO:0043065">
    <property type="term" value="P:positive regulation of apoptotic process"/>
    <property type="evidence" value="ECO:0000314"/>
    <property type="project" value="MGI"/>
</dbReference>
<dbReference type="GO" id="GO:0008284">
    <property type="term" value="P:positive regulation of cell population proliferation"/>
    <property type="evidence" value="ECO:0000314"/>
    <property type="project" value="MGI"/>
</dbReference>
<dbReference type="GO" id="GO:0043068">
    <property type="term" value="P:positive regulation of programmed cell death"/>
    <property type="evidence" value="ECO:0000315"/>
    <property type="project" value="UniProtKB"/>
</dbReference>
<dbReference type="GO" id="GO:0045944">
    <property type="term" value="P:positive regulation of transcription by RNA polymerase II"/>
    <property type="evidence" value="ECO:0000315"/>
    <property type="project" value="UniProtKB"/>
</dbReference>
<dbReference type="GO" id="GO:0030511">
    <property type="term" value="P:positive regulation of transforming growth factor beta receptor signaling pathway"/>
    <property type="evidence" value="ECO:0000250"/>
    <property type="project" value="UniProtKB"/>
</dbReference>
<dbReference type="CDD" id="cd21938">
    <property type="entry name" value="ZIP_TSC22D1"/>
    <property type="match status" value="1"/>
</dbReference>
<dbReference type="FunFam" id="1.20.5.490:FF:000002">
    <property type="entry name" value="TSC22 domain family, member 1"/>
    <property type="match status" value="1"/>
</dbReference>
<dbReference type="Gene3D" id="1.20.5.490">
    <property type="entry name" value="Single helix bin"/>
    <property type="match status" value="1"/>
</dbReference>
<dbReference type="InterPro" id="IPR000580">
    <property type="entry name" value="TSC22/Bun"/>
</dbReference>
<dbReference type="InterPro" id="IPR047862">
    <property type="entry name" value="TSC22/BUN_CS"/>
</dbReference>
<dbReference type="PANTHER" id="PTHR46745">
    <property type="entry name" value="TSC22 DOMAIN FAMILY PROTEIN 1"/>
    <property type="match status" value="1"/>
</dbReference>
<dbReference type="PANTHER" id="PTHR46745:SF1">
    <property type="entry name" value="TSC22 DOMAIN FAMILY PROTEIN 1"/>
    <property type="match status" value="1"/>
</dbReference>
<dbReference type="Pfam" id="PF01166">
    <property type="entry name" value="TSC22"/>
    <property type="match status" value="1"/>
</dbReference>
<dbReference type="SUPFAM" id="SSF58026">
    <property type="entry name" value="Delta-sleep-inducing peptide immunoreactive peptide"/>
    <property type="match status" value="1"/>
</dbReference>
<dbReference type="PROSITE" id="PS01289">
    <property type="entry name" value="TSC22"/>
    <property type="match status" value="1"/>
</dbReference>
<proteinExistence type="evidence at protein level"/>
<accession>P62500</accession>
<accession>Q00992</accession>
<accession>Q69Z44</accession>
<accession>Q6PDK1</accession>
<accession>Q9EQN4</accession>